<proteinExistence type="evidence at transcript level"/>
<keyword id="KW-0090">Biological rhythms</keyword>
<keyword id="KW-1185">Reference proteome</keyword>
<keyword id="KW-0732">Signal</keyword>
<dbReference type="EMBL" id="X76206">
    <property type="protein sequence ID" value="CAA53799.1"/>
    <property type="molecule type" value="Genomic_DNA"/>
</dbReference>
<dbReference type="EMBL" id="AL024485">
    <property type="protein sequence ID" value="CAA19674.1"/>
    <property type="molecule type" value="Genomic_DNA"/>
</dbReference>
<dbReference type="EMBL" id="AE014298">
    <property type="protein sequence ID" value="AAF45805.2"/>
    <property type="molecule type" value="Genomic_DNA"/>
</dbReference>
<dbReference type="EMBL" id="AY071726">
    <property type="protein sequence ID" value="AAL49348.1"/>
    <property type="molecule type" value="mRNA"/>
</dbReference>
<dbReference type="EMBL" id="AY047980">
    <property type="protein sequence ID" value="AAN02290.1"/>
    <property type="molecule type" value="Genomic_DNA"/>
</dbReference>
<dbReference type="EMBL" id="AY047981">
    <property type="protein sequence ID" value="AAN02292.1"/>
    <property type="molecule type" value="Genomic_DNA"/>
</dbReference>
<dbReference type="EMBL" id="AY047982">
    <property type="protein sequence ID" value="AAN02294.1"/>
    <property type="molecule type" value="Genomic_DNA"/>
</dbReference>
<dbReference type="EMBL" id="AY047983">
    <property type="protein sequence ID" value="AAN02296.1"/>
    <property type="molecule type" value="Genomic_DNA"/>
</dbReference>
<dbReference type="EMBL" id="AY047984">
    <property type="protein sequence ID" value="AAN02298.1"/>
    <property type="molecule type" value="Genomic_DNA"/>
</dbReference>
<dbReference type="EMBL" id="AY047985">
    <property type="protein sequence ID" value="AAN02300.1"/>
    <property type="molecule type" value="Genomic_DNA"/>
</dbReference>
<dbReference type="EMBL" id="AY047986">
    <property type="protein sequence ID" value="AAN02302.1"/>
    <property type="molecule type" value="Genomic_DNA"/>
</dbReference>
<dbReference type="EMBL" id="AY047987">
    <property type="protein sequence ID" value="AAN02304.1"/>
    <property type="molecule type" value="Genomic_DNA"/>
</dbReference>
<dbReference type="EMBL" id="AY047988">
    <property type="protein sequence ID" value="AAN02306.1"/>
    <property type="molecule type" value="Genomic_DNA"/>
</dbReference>
<dbReference type="EMBL" id="AY047989">
    <property type="protein sequence ID" value="AAN02308.1"/>
    <property type="molecule type" value="Genomic_DNA"/>
</dbReference>
<dbReference type="EMBL" id="AY047990">
    <property type="protein sequence ID" value="AAN02310.1"/>
    <property type="molecule type" value="Genomic_DNA"/>
</dbReference>
<dbReference type="EMBL" id="AY047991">
    <property type="protein sequence ID" value="AAN02312.1"/>
    <property type="molecule type" value="Genomic_DNA"/>
</dbReference>
<dbReference type="EMBL" id="AY047992">
    <property type="protein sequence ID" value="AAN02314.1"/>
    <property type="molecule type" value="Genomic_DNA"/>
</dbReference>
<dbReference type="EMBL" id="AY047993">
    <property type="protein sequence ID" value="AAN02316.1"/>
    <property type="molecule type" value="Genomic_DNA"/>
</dbReference>
<dbReference type="EMBL" id="AY047994">
    <property type="protein sequence ID" value="AAN02318.1"/>
    <property type="molecule type" value="Genomic_DNA"/>
</dbReference>
<dbReference type="EMBL" id="AY047995">
    <property type="protein sequence ID" value="AAN02320.1"/>
    <property type="molecule type" value="Genomic_DNA"/>
</dbReference>
<dbReference type="EMBL" id="AY047996">
    <property type="protein sequence ID" value="AAN02322.1"/>
    <property type="molecule type" value="Genomic_DNA"/>
</dbReference>
<dbReference type="EMBL" id="AY047997">
    <property type="protein sequence ID" value="AAN02324.1"/>
    <property type="molecule type" value="Genomic_DNA"/>
</dbReference>
<dbReference type="EMBL" id="AY047998">
    <property type="protein sequence ID" value="AAN02326.1"/>
    <property type="molecule type" value="Genomic_DNA"/>
</dbReference>
<dbReference type="EMBL" id="AY047999">
    <property type="protein sequence ID" value="AAN02328.1"/>
    <property type="molecule type" value="Genomic_DNA"/>
</dbReference>
<dbReference type="EMBL" id="AY048000">
    <property type="protein sequence ID" value="AAN02330.1"/>
    <property type="molecule type" value="Genomic_DNA"/>
</dbReference>
<dbReference type="EMBL" id="AY048001">
    <property type="protein sequence ID" value="AAN02332.1"/>
    <property type="molecule type" value="Genomic_DNA"/>
</dbReference>
<dbReference type="EMBL" id="AY048002">
    <property type="protein sequence ID" value="AAN02334.1"/>
    <property type="molecule type" value="Genomic_DNA"/>
</dbReference>
<dbReference type="EMBL" id="AY048003">
    <property type="protein sequence ID" value="AAN02336.1"/>
    <property type="molecule type" value="Genomic_DNA"/>
</dbReference>
<dbReference type="EMBL" id="AY048004">
    <property type="protein sequence ID" value="AAN02338.1"/>
    <property type="molecule type" value="Genomic_DNA"/>
</dbReference>
<dbReference type="EMBL" id="AY048005">
    <property type="protein sequence ID" value="AAN02340.1"/>
    <property type="molecule type" value="Genomic_DNA"/>
</dbReference>
<dbReference type="EMBL" id="AY048006">
    <property type="protein sequence ID" value="AAN02342.1"/>
    <property type="molecule type" value="Genomic_DNA"/>
</dbReference>
<dbReference type="EMBL" id="AY048007">
    <property type="protein sequence ID" value="AAN02344.1"/>
    <property type="molecule type" value="Genomic_DNA"/>
</dbReference>
<dbReference type="EMBL" id="AY048008">
    <property type="protein sequence ID" value="AAN02346.1"/>
    <property type="molecule type" value="Genomic_DNA"/>
</dbReference>
<dbReference type="EMBL" id="AY048009">
    <property type="protein sequence ID" value="AAN02348.1"/>
    <property type="molecule type" value="Genomic_DNA"/>
</dbReference>
<dbReference type="EMBL" id="AY048010">
    <property type="protein sequence ID" value="AAN02350.1"/>
    <property type="molecule type" value="Genomic_DNA"/>
</dbReference>
<dbReference type="EMBL" id="AY048011">
    <property type="protein sequence ID" value="AAN02352.1"/>
    <property type="molecule type" value="Genomic_DNA"/>
</dbReference>
<dbReference type="EMBL" id="AY048012">
    <property type="protein sequence ID" value="AAN02354.1"/>
    <property type="molecule type" value="Genomic_DNA"/>
</dbReference>
<dbReference type="EMBL" id="AY048013">
    <property type="protein sequence ID" value="AAN02356.1"/>
    <property type="molecule type" value="Genomic_DNA"/>
</dbReference>
<dbReference type="EMBL" id="AY048014">
    <property type="protein sequence ID" value="AAN02358.1"/>
    <property type="molecule type" value="Genomic_DNA"/>
</dbReference>
<dbReference type="EMBL" id="AY048015">
    <property type="protein sequence ID" value="AAN02360.1"/>
    <property type="molecule type" value="Genomic_DNA"/>
</dbReference>
<dbReference type="EMBL" id="AY048016">
    <property type="protein sequence ID" value="AAN02362.1"/>
    <property type="molecule type" value="Genomic_DNA"/>
</dbReference>
<dbReference type="EMBL" id="AY048017">
    <property type="protein sequence ID" value="AAN02364.1"/>
    <property type="molecule type" value="Genomic_DNA"/>
</dbReference>
<dbReference type="EMBL" id="AY048018">
    <property type="protein sequence ID" value="AAN02366.1"/>
    <property type="molecule type" value="Genomic_DNA"/>
</dbReference>
<dbReference type="EMBL" id="AY048019">
    <property type="protein sequence ID" value="AAN02368.1"/>
    <property type="molecule type" value="Genomic_DNA"/>
</dbReference>
<dbReference type="EMBL" id="AY048020">
    <property type="protein sequence ID" value="AAN02370.1"/>
    <property type="molecule type" value="Genomic_DNA"/>
</dbReference>
<dbReference type="EMBL" id="AY048021">
    <property type="protein sequence ID" value="AAN02372.1"/>
    <property type="molecule type" value="Genomic_DNA"/>
</dbReference>
<dbReference type="EMBL" id="AY048022">
    <property type="protein sequence ID" value="AAN02374.1"/>
    <property type="molecule type" value="Genomic_DNA"/>
</dbReference>
<dbReference type="EMBL" id="AY048023">
    <property type="protein sequence ID" value="AAN02376.1"/>
    <property type="molecule type" value="Genomic_DNA"/>
</dbReference>
<dbReference type="EMBL" id="AY048024">
    <property type="protein sequence ID" value="AAN02378.1"/>
    <property type="molecule type" value="Genomic_DNA"/>
</dbReference>
<dbReference type="EMBL" id="AY048025">
    <property type="protein sequence ID" value="AAN02380.1"/>
    <property type="molecule type" value="Genomic_DNA"/>
</dbReference>
<dbReference type="EMBL" id="AY048026">
    <property type="protein sequence ID" value="AAN02382.1"/>
    <property type="molecule type" value="Genomic_DNA"/>
</dbReference>
<dbReference type="EMBL" id="AY048027">
    <property type="protein sequence ID" value="AAN02384.1"/>
    <property type="molecule type" value="Genomic_DNA"/>
</dbReference>
<dbReference type="EMBL" id="AY048028">
    <property type="protein sequence ID" value="AAN02386.1"/>
    <property type="molecule type" value="Genomic_DNA"/>
</dbReference>
<dbReference type="EMBL" id="AY048029">
    <property type="protein sequence ID" value="AAN02388.1"/>
    <property type="molecule type" value="Genomic_DNA"/>
</dbReference>
<dbReference type="EMBL" id="AY048030">
    <property type="protein sequence ID" value="AAN02390.1"/>
    <property type="molecule type" value="Genomic_DNA"/>
</dbReference>
<dbReference type="EMBL" id="AY048031">
    <property type="protein sequence ID" value="AAN02392.1"/>
    <property type="molecule type" value="Genomic_DNA"/>
</dbReference>
<dbReference type="EMBL" id="AY048032">
    <property type="protein sequence ID" value="AAN02394.1"/>
    <property type="molecule type" value="Genomic_DNA"/>
</dbReference>
<dbReference type="EMBL" id="AY048033">
    <property type="protein sequence ID" value="AAN02396.1"/>
    <property type="molecule type" value="Genomic_DNA"/>
</dbReference>
<dbReference type="EMBL" id="AY048034">
    <property type="protein sequence ID" value="AAN02398.1"/>
    <property type="molecule type" value="Genomic_DNA"/>
</dbReference>
<dbReference type="EMBL" id="AY048035">
    <property type="protein sequence ID" value="AAN02400.1"/>
    <property type="molecule type" value="Genomic_DNA"/>
</dbReference>
<dbReference type="EMBL" id="AY048036">
    <property type="protein sequence ID" value="AAN02402.1"/>
    <property type="molecule type" value="Genomic_DNA"/>
</dbReference>
<dbReference type="EMBL" id="AY048037">
    <property type="protein sequence ID" value="AAN02404.1"/>
    <property type="molecule type" value="Genomic_DNA"/>
</dbReference>
<dbReference type="EMBL" id="AY048038">
    <property type="protein sequence ID" value="AAN02406.1"/>
    <property type="molecule type" value="Genomic_DNA"/>
</dbReference>
<dbReference type="EMBL" id="AY048040">
    <property type="protein sequence ID" value="AAN02408.1"/>
    <property type="molecule type" value="Genomic_DNA"/>
</dbReference>
<dbReference type="EMBL" id="AY048041">
    <property type="protein sequence ID" value="AAN02410.1"/>
    <property type="molecule type" value="Genomic_DNA"/>
</dbReference>
<dbReference type="EMBL" id="AY048042">
    <property type="protein sequence ID" value="AAN02412.1"/>
    <property type="molecule type" value="Genomic_DNA"/>
</dbReference>
<dbReference type="PIR" id="A60091">
    <property type="entry name" value="A60091"/>
</dbReference>
<dbReference type="RefSeq" id="NP_570016.1">
    <property type="nucleotide sequence ID" value="NM_130660.2"/>
</dbReference>
<dbReference type="SMR" id="O76879"/>
<dbReference type="FunCoup" id="O76879">
    <property type="interactions" value="15"/>
</dbReference>
<dbReference type="IntAct" id="O76879">
    <property type="interactions" value="1"/>
</dbReference>
<dbReference type="STRING" id="7227.FBpp0070480"/>
<dbReference type="PaxDb" id="7227-FBpp0070480"/>
<dbReference type="DNASU" id="31252"/>
<dbReference type="EnsemblMetazoa" id="FBtr0070504">
    <property type="protein sequence ID" value="FBpp0070480"/>
    <property type="gene ID" value="FBgn0000092"/>
</dbReference>
<dbReference type="GeneID" id="31252"/>
<dbReference type="KEGG" id="dme:Dmel_CG2650"/>
<dbReference type="AGR" id="FB:FBgn0000092"/>
<dbReference type="CTD" id="31252"/>
<dbReference type="FlyBase" id="FBgn0000092">
    <property type="gene designation" value="dyw"/>
</dbReference>
<dbReference type="VEuPathDB" id="VectorBase:FBgn0000092"/>
<dbReference type="eggNOG" id="ENOG502T6I4">
    <property type="taxonomic scope" value="Eukaryota"/>
</dbReference>
<dbReference type="GeneTree" id="ENSGT00530000064246"/>
<dbReference type="HOGENOM" id="CLU_069908_0_2_1"/>
<dbReference type="InParanoid" id="O76879"/>
<dbReference type="OMA" id="HTYLNIT"/>
<dbReference type="OrthoDB" id="8118208at2759"/>
<dbReference type="PhylomeDB" id="O76879"/>
<dbReference type="BioGRID-ORCS" id="31252">
    <property type="hits" value="0 hits in 1 CRISPR screen"/>
</dbReference>
<dbReference type="GenomeRNAi" id="31252"/>
<dbReference type="PRO" id="PR:O76879"/>
<dbReference type="Proteomes" id="UP000000803">
    <property type="component" value="Chromosome X"/>
</dbReference>
<dbReference type="Bgee" id="FBgn0000092">
    <property type="expression patterns" value="Expressed in second segment of antenna (Drosophila) and 9 other cell types or tissues"/>
</dbReference>
<dbReference type="GO" id="GO:0005615">
    <property type="term" value="C:extracellular space"/>
    <property type="evidence" value="ECO:0000250"/>
    <property type="project" value="FlyBase"/>
</dbReference>
<dbReference type="GO" id="GO:0007623">
    <property type="term" value="P:circadian rhythm"/>
    <property type="evidence" value="ECO:0000270"/>
    <property type="project" value="UniProtKB"/>
</dbReference>
<dbReference type="GO" id="GO:0010841">
    <property type="term" value="P:positive regulation of circadian sleep/wake cycle, wakefulness"/>
    <property type="evidence" value="ECO:0000315"/>
    <property type="project" value="UniProtKB"/>
</dbReference>
<dbReference type="FunFam" id="3.15.10.30:FF:000001">
    <property type="entry name" value="Takeout-like protein 1"/>
    <property type="match status" value="1"/>
</dbReference>
<dbReference type="Gene3D" id="3.15.10.30">
    <property type="entry name" value="Haemolymph juvenile hormone binding protein"/>
    <property type="match status" value="1"/>
</dbReference>
<dbReference type="InterPro" id="IPR010562">
    <property type="entry name" value="Haemolymph_juvenile_hormone-bd"/>
</dbReference>
<dbReference type="InterPro" id="IPR038606">
    <property type="entry name" value="To_sf"/>
</dbReference>
<dbReference type="PANTHER" id="PTHR11008:SF32">
    <property type="entry name" value="CIRCADIAN CLOCK-CONTROLLED PROTEIN DAYWAKE-RELATED"/>
    <property type="match status" value="1"/>
</dbReference>
<dbReference type="PANTHER" id="PTHR11008">
    <property type="entry name" value="PROTEIN TAKEOUT-LIKE PROTEIN"/>
    <property type="match status" value="1"/>
</dbReference>
<dbReference type="Pfam" id="PF06585">
    <property type="entry name" value="JHBP"/>
    <property type="match status" value="1"/>
</dbReference>
<dbReference type="SMART" id="SM00700">
    <property type="entry name" value="JHBP"/>
    <property type="match status" value="1"/>
</dbReference>
<protein>
    <recommendedName>
        <fullName evidence="5">Circadian clock-controlled protein daywake</fullName>
    </recommendedName>
</protein>
<feature type="signal peptide" evidence="1">
    <location>
        <begin position="1"/>
        <end position="25"/>
    </location>
</feature>
<feature type="chain" id="PRO_0000020860" description="Circadian clock-controlled protein daywake">
    <location>
        <begin position="26"/>
        <end position="260"/>
    </location>
</feature>
<feature type="sequence variant" description="In strain: Oregon-R, wi4, wi15, wi6, wi24, wi30, wi32 and wi33." evidence="2">
    <original>Q</original>
    <variation>L</variation>
    <location>
        <position position="219"/>
    </location>
</feature>
<feature type="sequence conflict" description="In Ref. 1." evidence="6" ref="1">
    <original>VAALEPI</original>
    <variation>SGRAGAHS</variation>
    <location>
        <begin position="64"/>
        <end position="70"/>
    </location>
</feature>
<feature type="sequence conflict" description="In Ref. 1." evidence="6" ref="1">
    <original>G</original>
    <variation>GSSPS</variation>
    <location>
        <position position="194"/>
    </location>
</feature>
<reference evidence="6" key="1">
    <citation type="journal article" date="1989" name="Development">
        <title>Expression of a Drosophila mRNA is under circadian clock control during pupation.</title>
        <authorList>
            <person name="Lorenz L.J."/>
            <person name="Hall J.C."/>
            <person name="Rosbash M."/>
        </authorList>
    </citation>
    <scope>NUCLEOTIDE SEQUENCE [MRNA]</scope>
    <scope>FUNCTION</scope>
    <scope>TISSUE SPECIFICITY</scope>
    <scope>DEVELOPMENTAL STAGE</scope>
    <source>
        <strain>Oregon-R</strain>
        <tissue>Head</tissue>
    </source>
</reference>
<reference evidence="6" key="2">
    <citation type="journal article" date="2000" name="Science">
        <title>The genome sequence of Drosophila melanogaster.</title>
        <authorList>
            <person name="Adams M.D."/>
            <person name="Celniker S.E."/>
            <person name="Holt R.A."/>
            <person name="Evans C.A."/>
            <person name="Gocayne J.D."/>
            <person name="Amanatides P.G."/>
            <person name="Scherer S.E."/>
            <person name="Li P.W."/>
            <person name="Hoskins R.A."/>
            <person name="Galle R.F."/>
            <person name="George R.A."/>
            <person name="Lewis S.E."/>
            <person name="Richards S."/>
            <person name="Ashburner M."/>
            <person name="Henderson S.N."/>
            <person name="Sutton G.G."/>
            <person name="Wortman J.R."/>
            <person name="Yandell M.D."/>
            <person name="Zhang Q."/>
            <person name="Chen L.X."/>
            <person name="Brandon R.C."/>
            <person name="Rogers Y.-H.C."/>
            <person name="Blazej R.G."/>
            <person name="Champe M."/>
            <person name="Pfeiffer B.D."/>
            <person name="Wan K.H."/>
            <person name="Doyle C."/>
            <person name="Baxter E.G."/>
            <person name="Helt G."/>
            <person name="Nelson C.R."/>
            <person name="Miklos G.L.G."/>
            <person name="Abril J.F."/>
            <person name="Agbayani A."/>
            <person name="An H.-J."/>
            <person name="Andrews-Pfannkoch C."/>
            <person name="Baldwin D."/>
            <person name="Ballew R.M."/>
            <person name="Basu A."/>
            <person name="Baxendale J."/>
            <person name="Bayraktaroglu L."/>
            <person name="Beasley E.M."/>
            <person name="Beeson K.Y."/>
            <person name="Benos P.V."/>
            <person name="Berman B.P."/>
            <person name="Bhandari D."/>
            <person name="Bolshakov S."/>
            <person name="Borkova D."/>
            <person name="Botchan M.R."/>
            <person name="Bouck J."/>
            <person name="Brokstein P."/>
            <person name="Brottier P."/>
            <person name="Burtis K.C."/>
            <person name="Busam D.A."/>
            <person name="Butler H."/>
            <person name="Cadieu E."/>
            <person name="Center A."/>
            <person name="Chandra I."/>
            <person name="Cherry J.M."/>
            <person name="Cawley S."/>
            <person name="Dahlke C."/>
            <person name="Davenport L.B."/>
            <person name="Davies P."/>
            <person name="de Pablos B."/>
            <person name="Delcher A."/>
            <person name="Deng Z."/>
            <person name="Mays A.D."/>
            <person name="Dew I."/>
            <person name="Dietz S.M."/>
            <person name="Dodson K."/>
            <person name="Doup L.E."/>
            <person name="Downes M."/>
            <person name="Dugan-Rocha S."/>
            <person name="Dunkov B.C."/>
            <person name="Dunn P."/>
            <person name="Durbin K.J."/>
            <person name="Evangelista C.C."/>
            <person name="Ferraz C."/>
            <person name="Ferriera S."/>
            <person name="Fleischmann W."/>
            <person name="Fosler C."/>
            <person name="Gabrielian A.E."/>
            <person name="Garg N.S."/>
            <person name="Gelbart W.M."/>
            <person name="Glasser K."/>
            <person name="Glodek A."/>
            <person name="Gong F."/>
            <person name="Gorrell J.H."/>
            <person name="Gu Z."/>
            <person name="Guan P."/>
            <person name="Harris M."/>
            <person name="Harris N.L."/>
            <person name="Harvey D.A."/>
            <person name="Heiman T.J."/>
            <person name="Hernandez J.R."/>
            <person name="Houck J."/>
            <person name="Hostin D."/>
            <person name="Houston K.A."/>
            <person name="Howland T.J."/>
            <person name="Wei M.-H."/>
            <person name="Ibegwam C."/>
            <person name="Jalali M."/>
            <person name="Kalush F."/>
            <person name="Karpen G.H."/>
            <person name="Ke Z."/>
            <person name="Kennison J.A."/>
            <person name="Ketchum K.A."/>
            <person name="Kimmel B.E."/>
            <person name="Kodira C.D."/>
            <person name="Kraft C.L."/>
            <person name="Kravitz S."/>
            <person name="Kulp D."/>
            <person name="Lai Z."/>
            <person name="Lasko P."/>
            <person name="Lei Y."/>
            <person name="Levitsky A.A."/>
            <person name="Li J.H."/>
            <person name="Li Z."/>
            <person name="Liang Y."/>
            <person name="Lin X."/>
            <person name="Liu X."/>
            <person name="Mattei B."/>
            <person name="McIntosh T.C."/>
            <person name="McLeod M.P."/>
            <person name="McPherson D."/>
            <person name="Merkulov G."/>
            <person name="Milshina N.V."/>
            <person name="Mobarry C."/>
            <person name="Morris J."/>
            <person name="Moshrefi A."/>
            <person name="Mount S.M."/>
            <person name="Moy M."/>
            <person name="Murphy B."/>
            <person name="Murphy L."/>
            <person name="Muzny D.M."/>
            <person name="Nelson D.L."/>
            <person name="Nelson D.R."/>
            <person name="Nelson K.A."/>
            <person name="Nixon K."/>
            <person name="Nusskern D.R."/>
            <person name="Pacleb J.M."/>
            <person name="Palazzolo M."/>
            <person name="Pittman G.S."/>
            <person name="Pan S."/>
            <person name="Pollard J."/>
            <person name="Puri V."/>
            <person name="Reese M.G."/>
            <person name="Reinert K."/>
            <person name="Remington K."/>
            <person name="Saunders R.D.C."/>
            <person name="Scheeler F."/>
            <person name="Shen H."/>
            <person name="Shue B.C."/>
            <person name="Siden-Kiamos I."/>
            <person name="Simpson M."/>
            <person name="Skupski M.P."/>
            <person name="Smith T.J."/>
            <person name="Spier E."/>
            <person name="Spradling A.C."/>
            <person name="Stapleton M."/>
            <person name="Strong R."/>
            <person name="Sun E."/>
            <person name="Svirskas R."/>
            <person name="Tector C."/>
            <person name="Turner R."/>
            <person name="Venter E."/>
            <person name="Wang A.H."/>
            <person name="Wang X."/>
            <person name="Wang Z.-Y."/>
            <person name="Wassarman D.A."/>
            <person name="Weinstock G.M."/>
            <person name="Weissenbach J."/>
            <person name="Williams S.M."/>
            <person name="Woodage T."/>
            <person name="Worley K.C."/>
            <person name="Wu D."/>
            <person name="Yang S."/>
            <person name="Yao Q.A."/>
            <person name="Ye J."/>
            <person name="Yeh R.-F."/>
            <person name="Zaveri J.S."/>
            <person name="Zhan M."/>
            <person name="Zhang G."/>
            <person name="Zhao Q."/>
            <person name="Zheng L."/>
            <person name="Zheng X.H."/>
            <person name="Zhong F.N."/>
            <person name="Zhong W."/>
            <person name="Zhou X."/>
            <person name="Zhu S.C."/>
            <person name="Zhu X."/>
            <person name="Smith H.O."/>
            <person name="Gibbs R.A."/>
            <person name="Myers E.W."/>
            <person name="Rubin G.M."/>
            <person name="Venter J.C."/>
        </authorList>
    </citation>
    <scope>NUCLEOTIDE SEQUENCE [LARGE SCALE GENOMIC DNA]</scope>
    <source>
        <strain>Berkeley</strain>
    </source>
</reference>
<reference evidence="6" key="3">
    <citation type="journal article" date="2002" name="Genome Biol.">
        <title>Annotation of the Drosophila melanogaster euchromatic genome: a systematic review.</title>
        <authorList>
            <person name="Misra S."/>
            <person name="Crosby M.A."/>
            <person name="Mungall C.J."/>
            <person name="Matthews B.B."/>
            <person name="Campbell K.S."/>
            <person name="Hradecky P."/>
            <person name="Huang Y."/>
            <person name="Kaminker J.S."/>
            <person name="Millburn G.H."/>
            <person name="Prochnik S.E."/>
            <person name="Smith C.D."/>
            <person name="Tupy J.L."/>
            <person name="Whitfield E.J."/>
            <person name="Bayraktaroglu L."/>
            <person name="Berman B.P."/>
            <person name="Bettencourt B.R."/>
            <person name="Celniker S.E."/>
            <person name="de Grey A.D.N.J."/>
            <person name="Drysdale R.A."/>
            <person name="Harris N.L."/>
            <person name="Richter J."/>
            <person name="Russo S."/>
            <person name="Schroeder A.J."/>
            <person name="Shu S.Q."/>
            <person name="Stapleton M."/>
            <person name="Yamada C."/>
            <person name="Ashburner M."/>
            <person name="Gelbart W.M."/>
            <person name="Rubin G.M."/>
            <person name="Lewis S.E."/>
        </authorList>
    </citation>
    <scope>GENOME REANNOTATION</scope>
    <source>
        <strain>Berkeley</strain>
    </source>
</reference>
<reference evidence="6" key="4">
    <citation type="journal article" date="2000" name="Science">
        <title>From sequence to chromosome: the tip of the X chromosome of D. melanogaster.</title>
        <authorList>
            <person name="Benos P.V."/>
            <person name="Gatt M.K."/>
            <person name="Ashburner M."/>
            <person name="Murphy L."/>
            <person name="Harris D."/>
            <person name="Barrell B.G."/>
            <person name="Ferraz C."/>
            <person name="Vidal S."/>
            <person name="Brun C."/>
            <person name="Demailles J."/>
            <person name="Cadieu E."/>
            <person name="Dreano S."/>
            <person name="Gloux S."/>
            <person name="Lelaure V."/>
            <person name="Mottier S."/>
            <person name="Galibert F."/>
            <person name="Borkova D."/>
            <person name="Minana B."/>
            <person name="Kafatos F.C."/>
            <person name="Louis C."/>
            <person name="Siden-Kiamos I."/>
            <person name="Bolshakov S."/>
            <person name="Papagiannakis G."/>
            <person name="Spanos L."/>
            <person name="Cox S."/>
            <person name="Madueno E."/>
            <person name="de Pablos B."/>
            <person name="Modolell J."/>
            <person name="Peter A."/>
            <person name="Schoettler P."/>
            <person name="Werner M."/>
            <person name="Mourkioti F."/>
            <person name="Beinert N."/>
            <person name="Dowe G."/>
            <person name="Schaefer U."/>
            <person name="Jaeckle H."/>
            <person name="Bucheton A."/>
            <person name="Callister D.M."/>
            <person name="Campbell L.A."/>
            <person name="Darlamitsou A."/>
            <person name="Henderson N.S."/>
            <person name="McMillan P.J."/>
            <person name="Salles C."/>
            <person name="Tait E.A."/>
            <person name="Valenti P."/>
            <person name="Saunders R.D.C."/>
            <person name="Glover D.M."/>
        </authorList>
    </citation>
    <scope>NUCLEOTIDE SEQUENCE [LARGE SCALE GENOMIC DNA]</scope>
    <source>
        <strain>Oregon-R</strain>
    </source>
</reference>
<reference key="5">
    <citation type="journal article" date="2002" name="Genome Biol.">
        <title>A Drosophila full-length cDNA resource.</title>
        <authorList>
            <person name="Stapleton M."/>
            <person name="Carlson J.W."/>
            <person name="Brokstein P."/>
            <person name="Yu C."/>
            <person name="Champe M."/>
            <person name="George R.A."/>
            <person name="Guarin H."/>
            <person name="Kronmiller B."/>
            <person name="Pacleb J.M."/>
            <person name="Park S."/>
            <person name="Wan K.H."/>
            <person name="Rubin G.M."/>
            <person name="Celniker S.E."/>
        </authorList>
    </citation>
    <scope>NUCLEOTIDE SEQUENCE [LARGE SCALE MRNA]</scope>
    <source>
        <strain>Berkeley</strain>
        <tissue>Head</tissue>
    </source>
</reference>
<reference evidence="6" key="6">
    <citation type="journal article" date="2002" name="Mol. Ecol.">
        <title>Single nucleotide polymorphisms derived from ancestral populations show no evidence for biased diversity estimates in Drosophila melanogaster.</title>
        <authorList>
            <person name="Schlotterer C."/>
            <person name="Harr B."/>
        </authorList>
    </citation>
    <scope>NUCLEOTIDE SEQUENCE OF 159-260</scope>
    <scope>VARIANT LEU-219</scope>
    <source>
        <strain>AF1</strain>
        <strain>AF2</strain>
        <strain>AF3</strain>
        <strain>AF4</strain>
        <strain>K1</strain>
        <strain>K11</strain>
        <strain>K13</strain>
        <strain>K14</strain>
        <strain>K16</strain>
        <strain>K17</strain>
        <strain>K2</strain>
        <strain>K20</strain>
        <strain>K21</strain>
        <strain>K3</strain>
        <strain>K5</strain>
        <strain>K7</strain>
        <strain>K9</strain>
        <strain>wi1</strain>
        <strain>wi10</strain>
        <strain>wi12</strain>
        <strain>wi13</strain>
        <strain>wi14</strain>
        <strain>wi15</strain>
        <strain>wi16</strain>
        <strain>wi17</strain>
        <strain>wi18</strain>
        <strain>wi19</strain>
        <strain>wi2</strain>
        <strain>wi21</strain>
        <strain>wi22</strain>
        <strain>wi23</strain>
        <strain>wi24</strain>
        <strain>wi25</strain>
        <strain>wi27</strain>
        <strain>wi28</strain>
        <strain>wi29</strain>
        <strain>wi3</strain>
        <strain>wi30</strain>
        <strain>wi31</strain>
        <strain>wi32</strain>
        <strain>wi33</strain>
        <strain>wi4</strain>
        <strain>wi5</strain>
        <strain>wi6</strain>
        <strain>wi7</strain>
        <strain>wi8</strain>
        <strain>wi9</strain>
        <strain>ZH1</strain>
        <strain>ZH13</strain>
        <strain>ZH16</strain>
        <strain>ZH18</strain>
        <strain>ZH19</strain>
        <strain>ZH2</strain>
        <strain>ZH20</strain>
        <strain>ZH21</strain>
        <strain>ZH23</strain>
        <strain>ZH25</strain>
        <strain>ZH29</strain>
        <strain>ZH31</strain>
        <strain>ZH33</strain>
        <strain>ZH35</strain>
        <strain>ZH36</strain>
    </source>
</reference>
<reference key="7">
    <citation type="journal article" date="2019" name="Curr. Biol.">
        <title>Daywake, an Anti-siesta Gene Linked to a Splicing-Based Thermostat from an Adjoining Clock Gene.</title>
        <authorList>
            <person name="Yang Y."/>
            <person name="Edery I."/>
        </authorList>
    </citation>
    <scope>FUNCTION</scope>
    <scope>INDUCTION</scope>
    <scope>DISRUPTION PHENOTYPE</scope>
</reference>
<sequence>MQLTGASMFLVWVGLLSWVSCRVDASEGFPSPLKRCKLQDESCLLAQAQTFFQAFKNGIPERQVAALEPIALGTMFIESGGHSESIKFKLTMSDAKLYNLANSMMVKSLKGFTKDLTRPLKLTLLLDNPELEVRAKYDVDGKLLILPIVSKGDLTIRLNDVHTKVWITAEPVKRSDGHTYLNITDYKTATKIKGGHFDLSNLFNDNKELRDSTLKVLNQEWSTLALDVQPKINEACAKAFSAIVQSLWANIPYDEFFEKE</sequence>
<comment type="function">
    <text evidence="3 4">Component of the circadian clock or downstream effector of clock function (PubMed:2517256, PubMed:31080079). Required for suppressing daytime sleep (siesta) under ambient environmental temperatures. Part of a heat avoidance mechanism that modulates daytime sleep behavior under different environmental temperatures to minimize the risk of heat exposure. Under cooler ambient temperatures, suppresses daytime sleep (siesta) and thus allows for longer periods of daytime activity (PubMed:31080079).</text>
</comment>
<comment type="tissue specificity">
    <text evidence="3">Epidermis of newly eclosed adults.</text>
</comment>
<comment type="developmental stage">
    <text evidence="3">Abundantly expressed during pupation and decreases rapidly with age. Expression is under pupal (eclosion) circadian clock control.</text>
</comment>
<comment type="induction">
    <text evidence="4">Expression is under the control of a thermosensitive enhancer element called dmpi8 that is encoded in an intron of the close-by circadian clock gene per. At lower temperatures, splicing efficiency of dmpi8 is increased resulting in an increase in the expression of dyw.</text>
</comment>
<comment type="disruption phenotype">
    <text evidence="4">RNAi-mediated knockdown in per-expressing cells increases daytime sleep levels whereas night-time sleep levels are relatively unaffected.</text>
</comment>
<comment type="miscellaneous">
    <text evidence="5">Named 'daywake' based upon its function in daytime sleep suppression.</text>
</comment>
<comment type="similarity">
    <text evidence="6">Belongs to the TO family.</text>
</comment>
<accession>O76879</accession>
<accession>Q24484</accession>
<accession>Q8MM43</accession>
<accession>Q8MM44</accession>
<accession>Q8SY82</accession>
<accession>Q9W4W9</accession>
<name>CCCP_DROME</name>
<organism evidence="7">
    <name type="scientific">Drosophila melanogaster</name>
    <name type="common">Fruit fly</name>
    <dbReference type="NCBI Taxonomy" id="7227"/>
    <lineage>
        <taxon>Eukaryota</taxon>
        <taxon>Metazoa</taxon>
        <taxon>Ecdysozoa</taxon>
        <taxon>Arthropoda</taxon>
        <taxon>Hexapoda</taxon>
        <taxon>Insecta</taxon>
        <taxon>Pterygota</taxon>
        <taxon>Neoptera</taxon>
        <taxon>Endopterygota</taxon>
        <taxon>Diptera</taxon>
        <taxon>Brachycera</taxon>
        <taxon>Muscomorpha</taxon>
        <taxon>Ephydroidea</taxon>
        <taxon>Drosophilidae</taxon>
        <taxon>Drosophila</taxon>
        <taxon>Sophophora</taxon>
    </lineage>
</organism>
<evidence type="ECO:0000255" key="1"/>
<evidence type="ECO:0000269" key="2">
    <source>
    </source>
</evidence>
<evidence type="ECO:0000269" key="3">
    <source>
    </source>
</evidence>
<evidence type="ECO:0000269" key="4">
    <source>
    </source>
</evidence>
<evidence type="ECO:0000303" key="5">
    <source>
    </source>
</evidence>
<evidence type="ECO:0000305" key="6"/>
<evidence type="ECO:0000312" key="7">
    <source>
        <dbReference type="EMBL" id="AAF45805.2"/>
    </source>
</evidence>
<evidence type="ECO:0000312" key="8">
    <source>
        <dbReference type="FlyBase" id="FBgn0000092"/>
    </source>
</evidence>
<gene>
    <name evidence="5 8" type="primary">dyw</name>
    <name evidence="8" type="synonym">anon-3B1.2</name>
    <name evidence="8" type="ORF">CG2650</name>
</gene>